<protein>
    <recommendedName>
        <fullName>DNA-directed RNA polymerase III subunit RPC10</fullName>
        <shortName>RNA polymerase III subunit C10</shortName>
    </recommendedName>
    <alternativeName>
        <fullName>DNA-directed RNA polymerases III 12.5 kDa polypeptide</fullName>
    </alternativeName>
    <alternativeName>
        <fullName>RNA polymerase III subunit C11</fullName>
    </alternativeName>
</protein>
<keyword id="KW-0240">DNA-directed RNA polymerase</keyword>
<keyword id="KW-0479">Metal-binding</keyword>
<keyword id="KW-0539">Nucleus</keyword>
<keyword id="KW-1185">Reference proteome</keyword>
<keyword id="KW-0804">Transcription</keyword>
<keyword id="KW-0862">Zinc</keyword>
<keyword id="KW-0863">Zinc-finger</keyword>
<sequence length="109" mass="12815">MQFCPTCGNHLIVAVDEEGRNAFDCRTCPYHFPISTFLYSRHEFAQKEVDDVLGGEEAFESNQQTEVTCENTKCDNNRAYFFQLQIRSADEPMSTFYRCTKCKFQWREN</sequence>
<reference key="1">
    <citation type="submission" date="1997-10" db="EMBL/GenBank/DDBJ databases">
        <authorList>
            <person name="Shpakovski G.V."/>
            <person name="Lebedenko E.N."/>
        </authorList>
    </citation>
    <scope>NUCLEOTIDE SEQUENCE [MRNA]</scope>
    <source>
        <strain>972 / ATCC 24843</strain>
    </source>
</reference>
<reference key="2">
    <citation type="journal article" date="1998" name="Genes Dev.">
        <title>The RNA cleavage activity of RNA polymerase III is mediated by an essential TFIIS-like subunit and is important for transcription termination.</title>
        <authorList>
            <person name="Chedin S."/>
            <person name="Riva M."/>
            <person name="Schultz P."/>
            <person name="Sentenac A."/>
            <person name="Carles C."/>
        </authorList>
    </citation>
    <scope>NUCLEOTIDE SEQUENCE [GENOMIC DNA]</scope>
</reference>
<reference key="3">
    <citation type="journal article" date="2002" name="Nature">
        <title>The genome sequence of Schizosaccharomyces pombe.</title>
        <authorList>
            <person name="Wood V."/>
            <person name="Gwilliam R."/>
            <person name="Rajandream M.A."/>
            <person name="Lyne M.H."/>
            <person name="Lyne R."/>
            <person name="Stewart A."/>
            <person name="Sgouros J.G."/>
            <person name="Peat N."/>
            <person name="Hayles J."/>
            <person name="Baker S.G."/>
            <person name="Basham D."/>
            <person name="Bowman S."/>
            <person name="Brooks K."/>
            <person name="Brown D."/>
            <person name="Brown S."/>
            <person name="Chillingworth T."/>
            <person name="Churcher C.M."/>
            <person name="Collins M."/>
            <person name="Connor R."/>
            <person name="Cronin A."/>
            <person name="Davis P."/>
            <person name="Feltwell T."/>
            <person name="Fraser A."/>
            <person name="Gentles S."/>
            <person name="Goble A."/>
            <person name="Hamlin N."/>
            <person name="Harris D.E."/>
            <person name="Hidalgo J."/>
            <person name="Hodgson G."/>
            <person name="Holroyd S."/>
            <person name="Hornsby T."/>
            <person name="Howarth S."/>
            <person name="Huckle E.J."/>
            <person name="Hunt S."/>
            <person name="Jagels K."/>
            <person name="James K.D."/>
            <person name="Jones L."/>
            <person name="Jones M."/>
            <person name="Leather S."/>
            <person name="McDonald S."/>
            <person name="McLean J."/>
            <person name="Mooney P."/>
            <person name="Moule S."/>
            <person name="Mungall K.L."/>
            <person name="Murphy L.D."/>
            <person name="Niblett D."/>
            <person name="Odell C."/>
            <person name="Oliver K."/>
            <person name="O'Neil S."/>
            <person name="Pearson D."/>
            <person name="Quail M.A."/>
            <person name="Rabbinowitsch E."/>
            <person name="Rutherford K.M."/>
            <person name="Rutter S."/>
            <person name="Saunders D."/>
            <person name="Seeger K."/>
            <person name="Sharp S."/>
            <person name="Skelton J."/>
            <person name="Simmonds M.N."/>
            <person name="Squares R."/>
            <person name="Squares S."/>
            <person name="Stevens K."/>
            <person name="Taylor K."/>
            <person name="Taylor R.G."/>
            <person name="Tivey A."/>
            <person name="Walsh S.V."/>
            <person name="Warren T."/>
            <person name="Whitehead S."/>
            <person name="Woodward J.R."/>
            <person name="Volckaert G."/>
            <person name="Aert R."/>
            <person name="Robben J."/>
            <person name="Grymonprez B."/>
            <person name="Weltjens I."/>
            <person name="Vanstreels E."/>
            <person name="Rieger M."/>
            <person name="Schaefer M."/>
            <person name="Mueller-Auer S."/>
            <person name="Gabel C."/>
            <person name="Fuchs M."/>
            <person name="Duesterhoeft A."/>
            <person name="Fritzc C."/>
            <person name="Holzer E."/>
            <person name="Moestl D."/>
            <person name="Hilbert H."/>
            <person name="Borzym K."/>
            <person name="Langer I."/>
            <person name="Beck A."/>
            <person name="Lehrach H."/>
            <person name="Reinhardt R."/>
            <person name="Pohl T.M."/>
            <person name="Eger P."/>
            <person name="Zimmermann W."/>
            <person name="Wedler H."/>
            <person name="Wambutt R."/>
            <person name="Purnelle B."/>
            <person name="Goffeau A."/>
            <person name="Cadieu E."/>
            <person name="Dreano S."/>
            <person name="Gloux S."/>
            <person name="Lelaure V."/>
            <person name="Mottier S."/>
            <person name="Galibert F."/>
            <person name="Aves S.J."/>
            <person name="Xiang Z."/>
            <person name="Hunt C."/>
            <person name="Moore K."/>
            <person name="Hurst S.M."/>
            <person name="Lucas M."/>
            <person name="Rochet M."/>
            <person name="Gaillardin C."/>
            <person name="Tallada V.A."/>
            <person name="Garzon A."/>
            <person name="Thode G."/>
            <person name="Daga R.R."/>
            <person name="Cruzado L."/>
            <person name="Jimenez J."/>
            <person name="Sanchez M."/>
            <person name="del Rey F."/>
            <person name="Benito J."/>
            <person name="Dominguez A."/>
            <person name="Revuelta J.L."/>
            <person name="Moreno S."/>
            <person name="Armstrong J."/>
            <person name="Forsburg S.L."/>
            <person name="Cerutti L."/>
            <person name="Lowe T."/>
            <person name="McCombie W.R."/>
            <person name="Paulsen I."/>
            <person name="Potashkin J."/>
            <person name="Shpakovski G.V."/>
            <person name="Ussery D."/>
            <person name="Barrell B.G."/>
            <person name="Nurse P."/>
        </authorList>
    </citation>
    <scope>NUCLEOTIDE SEQUENCE [LARGE SCALE GENOMIC DNA]</scope>
    <source>
        <strain>972 / ATCC 24843</strain>
    </source>
</reference>
<comment type="function">
    <text>DNA-dependent RNA polymerase catalyzes the transcription of DNA into RNA using the four ribonucleoside triphosphates as substrates. Component of RNA polymerase III which synthesizes small RNAs, such as 5S rRNA and tRNAs.</text>
</comment>
<comment type="subunit">
    <text evidence="1">Component of the RNA polymerase III (Pol III) complex consisting of 17 subunits.</text>
</comment>
<comment type="subcellular location">
    <subcellularLocation>
        <location evidence="2">Nucleus</location>
        <location evidence="2">Nucleolus</location>
    </subcellularLocation>
</comment>
<comment type="similarity">
    <text evidence="6">Belongs to the archaeal RpoM/eukaryotic RPA12/RPB9/RPC11 RNA polymerase family.</text>
</comment>
<name>RPC10_SCHPO</name>
<dbReference type="EMBL" id="AF027823">
    <property type="protein sequence ID" value="AAD03488.1"/>
    <property type="molecule type" value="mRNA"/>
</dbReference>
<dbReference type="EMBL" id="AF126532">
    <property type="protein sequence ID" value="AAD31425.1"/>
    <property type="molecule type" value="Genomic_DNA"/>
</dbReference>
<dbReference type="EMBL" id="CU329670">
    <property type="protein sequence ID" value="CAB16575.1"/>
    <property type="molecule type" value="Genomic_DNA"/>
</dbReference>
<dbReference type="PIR" id="T38145">
    <property type="entry name" value="T38145"/>
</dbReference>
<dbReference type="RefSeq" id="NP_593235.1">
    <property type="nucleotide sequence ID" value="NM_001018632.2"/>
</dbReference>
<dbReference type="SMR" id="O13896"/>
<dbReference type="BioGRID" id="278022">
    <property type="interactions" value="3"/>
</dbReference>
<dbReference type="ComplexPortal" id="CPX-8905">
    <property type="entry name" value="DNA-directed RNA polymerase III complex"/>
</dbReference>
<dbReference type="DIP" id="DIP-29537N"/>
<dbReference type="FunCoup" id="O13896">
    <property type="interactions" value="234"/>
</dbReference>
<dbReference type="IntAct" id="O13896">
    <property type="interactions" value="1"/>
</dbReference>
<dbReference type="STRING" id="284812.O13896"/>
<dbReference type="PaxDb" id="4896-SPAC22A12.05.1"/>
<dbReference type="EnsemblFungi" id="SPAC22A12.05.1">
    <property type="protein sequence ID" value="SPAC22A12.05.1:pep"/>
    <property type="gene ID" value="SPAC22A12.05"/>
</dbReference>
<dbReference type="GeneID" id="2541521"/>
<dbReference type="KEGG" id="spo:2541521"/>
<dbReference type="PomBase" id="SPAC22A12.05">
    <property type="gene designation" value="rpc11"/>
</dbReference>
<dbReference type="VEuPathDB" id="FungiDB:SPAC22A12.05"/>
<dbReference type="eggNOG" id="KOG2906">
    <property type="taxonomic scope" value="Eukaryota"/>
</dbReference>
<dbReference type="HOGENOM" id="CLU_093932_3_0_1"/>
<dbReference type="InParanoid" id="O13896"/>
<dbReference type="OMA" id="MEFCDEC"/>
<dbReference type="PhylomeDB" id="O13896"/>
<dbReference type="Reactome" id="R-SPO-76061">
    <property type="pathway name" value="RNA Polymerase III Transcription Initiation From Type 1 Promoter"/>
</dbReference>
<dbReference type="Reactome" id="R-SPO-76066">
    <property type="pathway name" value="RNA Polymerase III Transcription Initiation From Type 2 Promoter"/>
</dbReference>
<dbReference type="PRO" id="PR:O13896"/>
<dbReference type="Proteomes" id="UP000002485">
    <property type="component" value="Chromosome I"/>
</dbReference>
<dbReference type="GO" id="GO:0005829">
    <property type="term" value="C:cytosol"/>
    <property type="evidence" value="ECO:0007005"/>
    <property type="project" value="PomBase"/>
</dbReference>
<dbReference type="GO" id="GO:0005730">
    <property type="term" value="C:nucleolus"/>
    <property type="evidence" value="ECO:0007669"/>
    <property type="project" value="UniProtKB-SubCell"/>
</dbReference>
<dbReference type="GO" id="GO:0005634">
    <property type="term" value="C:nucleus"/>
    <property type="evidence" value="ECO:0007005"/>
    <property type="project" value="PomBase"/>
</dbReference>
<dbReference type="GO" id="GO:0005666">
    <property type="term" value="C:RNA polymerase III complex"/>
    <property type="evidence" value="ECO:0000314"/>
    <property type="project" value="PomBase"/>
</dbReference>
<dbReference type="GO" id="GO:0003899">
    <property type="term" value="F:DNA-directed RNA polymerase activity"/>
    <property type="evidence" value="ECO:0007669"/>
    <property type="project" value="InterPro"/>
</dbReference>
<dbReference type="GO" id="GO:0003676">
    <property type="term" value="F:nucleic acid binding"/>
    <property type="evidence" value="ECO:0007669"/>
    <property type="project" value="InterPro"/>
</dbReference>
<dbReference type="GO" id="GO:0008270">
    <property type="term" value="F:zinc ion binding"/>
    <property type="evidence" value="ECO:0007669"/>
    <property type="project" value="UniProtKB-KW"/>
</dbReference>
<dbReference type="GO" id="GO:0006386">
    <property type="term" value="P:termination of RNA polymerase III transcription"/>
    <property type="evidence" value="ECO:0000315"/>
    <property type="project" value="PomBase"/>
</dbReference>
<dbReference type="GO" id="GO:0042780">
    <property type="term" value="P:tRNA 3'-end processing"/>
    <property type="evidence" value="ECO:0000315"/>
    <property type="project" value="PomBase"/>
</dbReference>
<dbReference type="CDD" id="cd10509">
    <property type="entry name" value="Zn-ribbon_RPC11"/>
    <property type="match status" value="1"/>
</dbReference>
<dbReference type="FunFam" id="2.20.25.10:FF:000005">
    <property type="entry name" value="DNA-directed RNA polymerase subunit"/>
    <property type="match status" value="1"/>
</dbReference>
<dbReference type="Gene3D" id="2.20.25.10">
    <property type="match status" value="1"/>
</dbReference>
<dbReference type="InterPro" id="IPR019761">
    <property type="entry name" value="DNA-dir_RNA_pol-M_15_CS"/>
</dbReference>
<dbReference type="InterPro" id="IPR012164">
    <property type="entry name" value="Rpa12/Rpb9/Rpc10/TFS"/>
</dbReference>
<dbReference type="InterPro" id="IPR001529">
    <property type="entry name" value="Zn_ribbon_RPB9"/>
</dbReference>
<dbReference type="InterPro" id="IPR034014">
    <property type="entry name" value="Zn_ribbon_RPC11_C"/>
</dbReference>
<dbReference type="InterPro" id="IPR001222">
    <property type="entry name" value="Znf_TFIIS"/>
</dbReference>
<dbReference type="PANTHER" id="PTHR11239">
    <property type="entry name" value="DNA-DIRECTED RNA POLYMERASE"/>
    <property type="match status" value="1"/>
</dbReference>
<dbReference type="PANTHER" id="PTHR11239:SF12">
    <property type="entry name" value="DNA-DIRECTED RNA POLYMERASE III SUBUNIT RPC10"/>
    <property type="match status" value="1"/>
</dbReference>
<dbReference type="Pfam" id="PF02150">
    <property type="entry name" value="Zn_ribbon_RPB9"/>
    <property type="match status" value="1"/>
</dbReference>
<dbReference type="Pfam" id="PF01096">
    <property type="entry name" value="Zn_ribbon_TFIIS"/>
    <property type="match status" value="1"/>
</dbReference>
<dbReference type="PIRSF" id="PIRSF005586">
    <property type="entry name" value="RNApol_RpoM"/>
    <property type="match status" value="1"/>
</dbReference>
<dbReference type="SMART" id="SM00661">
    <property type="entry name" value="RPOL9"/>
    <property type="match status" value="1"/>
</dbReference>
<dbReference type="SMART" id="SM00440">
    <property type="entry name" value="ZnF_C2C2"/>
    <property type="match status" value="1"/>
</dbReference>
<dbReference type="SUPFAM" id="SSF57783">
    <property type="entry name" value="Zinc beta-ribbon"/>
    <property type="match status" value="1"/>
</dbReference>
<dbReference type="PROSITE" id="PS01030">
    <property type="entry name" value="RNA_POL_M_15KD"/>
    <property type="match status" value="1"/>
</dbReference>
<dbReference type="PROSITE" id="PS51133">
    <property type="entry name" value="ZF_TFIIS_2"/>
    <property type="match status" value="1"/>
</dbReference>
<accession>O13896</accession>
<organism>
    <name type="scientific">Schizosaccharomyces pombe (strain 972 / ATCC 24843)</name>
    <name type="common">Fission yeast</name>
    <dbReference type="NCBI Taxonomy" id="284812"/>
    <lineage>
        <taxon>Eukaryota</taxon>
        <taxon>Fungi</taxon>
        <taxon>Dikarya</taxon>
        <taxon>Ascomycota</taxon>
        <taxon>Taphrinomycotina</taxon>
        <taxon>Schizosaccharomycetes</taxon>
        <taxon>Schizosaccharomycetales</taxon>
        <taxon>Schizosaccharomycetaceae</taxon>
        <taxon>Schizosaccharomyces</taxon>
    </lineage>
</organism>
<gene>
    <name type="primary">rpc11</name>
    <name type="ORF">SPAC22A12.05</name>
</gene>
<feature type="chain" id="PRO_0000121477" description="DNA-directed RNA polymerase III subunit RPC10">
    <location>
        <begin position="1"/>
        <end position="109"/>
    </location>
</feature>
<feature type="zinc finger region" description="C4-type" evidence="3">
    <location>
        <begin position="4"/>
        <end position="28"/>
    </location>
</feature>
<feature type="zinc finger region" description="TFIIS-type" evidence="4">
    <location>
        <begin position="65"/>
        <end position="107"/>
    </location>
</feature>
<feature type="binding site" evidence="5">
    <location>
        <position position="4"/>
    </location>
    <ligand>
        <name>Zn(2+)</name>
        <dbReference type="ChEBI" id="CHEBI:29105"/>
        <label>1</label>
    </ligand>
</feature>
<feature type="binding site" evidence="5">
    <location>
        <position position="7"/>
    </location>
    <ligand>
        <name>Zn(2+)</name>
        <dbReference type="ChEBI" id="CHEBI:29105"/>
        <label>1</label>
    </ligand>
</feature>
<feature type="binding site" evidence="5">
    <location>
        <position position="25"/>
    </location>
    <ligand>
        <name>Zn(2+)</name>
        <dbReference type="ChEBI" id="CHEBI:29105"/>
        <label>1</label>
    </ligand>
</feature>
<feature type="binding site" evidence="5">
    <location>
        <position position="28"/>
    </location>
    <ligand>
        <name>Zn(2+)</name>
        <dbReference type="ChEBI" id="CHEBI:29105"/>
        <label>1</label>
    </ligand>
</feature>
<feature type="binding site" evidence="4">
    <location>
        <position position="69"/>
    </location>
    <ligand>
        <name>Zn(2+)</name>
        <dbReference type="ChEBI" id="CHEBI:29105"/>
        <label>2</label>
    </ligand>
</feature>
<feature type="binding site" evidence="4">
    <location>
        <position position="74"/>
    </location>
    <ligand>
        <name>Zn(2+)</name>
        <dbReference type="ChEBI" id="CHEBI:29105"/>
        <label>2</label>
    </ligand>
</feature>
<feature type="binding site" evidence="4">
    <location>
        <position position="99"/>
    </location>
    <ligand>
        <name>Zn(2+)</name>
        <dbReference type="ChEBI" id="CHEBI:29105"/>
        <label>2</label>
    </ligand>
</feature>
<feature type="binding site" evidence="4">
    <location>
        <position position="102"/>
    </location>
    <ligand>
        <name>Zn(2+)</name>
        <dbReference type="ChEBI" id="CHEBI:29105"/>
        <label>2</label>
    </ligand>
</feature>
<evidence type="ECO:0000250" key="1"/>
<evidence type="ECO:0000250" key="2">
    <source>
        <dbReference type="UniProtKB" id="P32529"/>
    </source>
</evidence>
<evidence type="ECO:0000255" key="3"/>
<evidence type="ECO:0000255" key="4">
    <source>
        <dbReference type="PROSITE-ProRule" id="PRU00472"/>
    </source>
</evidence>
<evidence type="ECO:0000255" key="5">
    <source>
        <dbReference type="PROSITE-ProRule" id="PRU10145"/>
    </source>
</evidence>
<evidence type="ECO:0000305" key="6"/>
<proteinExistence type="inferred from homology"/>